<reference key="1">
    <citation type="journal article" date="1997" name="Nature">
        <title>The nucleotide sequence of Saccharomyces cerevisiae chromosome IV.</title>
        <authorList>
            <person name="Jacq C."/>
            <person name="Alt-Moerbe J."/>
            <person name="Andre B."/>
            <person name="Arnold W."/>
            <person name="Bahr A."/>
            <person name="Ballesta J.P.G."/>
            <person name="Bargues M."/>
            <person name="Baron L."/>
            <person name="Becker A."/>
            <person name="Biteau N."/>
            <person name="Bloecker H."/>
            <person name="Blugeon C."/>
            <person name="Boskovic J."/>
            <person name="Brandt P."/>
            <person name="Brueckner M."/>
            <person name="Buitrago M.J."/>
            <person name="Coster F."/>
            <person name="Delaveau T."/>
            <person name="del Rey F."/>
            <person name="Dujon B."/>
            <person name="Eide L.G."/>
            <person name="Garcia-Cantalejo J.M."/>
            <person name="Goffeau A."/>
            <person name="Gomez-Peris A."/>
            <person name="Granotier C."/>
            <person name="Hanemann V."/>
            <person name="Hankeln T."/>
            <person name="Hoheisel J.D."/>
            <person name="Jaeger W."/>
            <person name="Jimenez A."/>
            <person name="Jonniaux J.-L."/>
            <person name="Kraemer C."/>
            <person name="Kuester H."/>
            <person name="Laamanen P."/>
            <person name="Legros Y."/>
            <person name="Louis E.J."/>
            <person name="Moeller-Rieker S."/>
            <person name="Monnet A."/>
            <person name="Moro M."/>
            <person name="Mueller-Auer S."/>
            <person name="Nussbaumer B."/>
            <person name="Paricio N."/>
            <person name="Paulin L."/>
            <person name="Perea J."/>
            <person name="Perez-Alonso M."/>
            <person name="Perez-Ortin J.E."/>
            <person name="Pohl T.M."/>
            <person name="Prydz H."/>
            <person name="Purnelle B."/>
            <person name="Rasmussen S.W."/>
            <person name="Remacha M.A."/>
            <person name="Revuelta J.L."/>
            <person name="Rieger M."/>
            <person name="Salom D."/>
            <person name="Saluz H.P."/>
            <person name="Saiz J.E."/>
            <person name="Saren A.-M."/>
            <person name="Schaefer M."/>
            <person name="Scharfe M."/>
            <person name="Schmidt E.R."/>
            <person name="Schneider C."/>
            <person name="Scholler P."/>
            <person name="Schwarz S."/>
            <person name="Soler-Mira A."/>
            <person name="Urrestarazu L.A."/>
            <person name="Verhasselt P."/>
            <person name="Vissers S."/>
            <person name="Voet M."/>
            <person name="Volckaert G."/>
            <person name="Wagner G."/>
            <person name="Wambutt R."/>
            <person name="Wedler E."/>
            <person name="Wedler H."/>
            <person name="Woelfl S."/>
            <person name="Harris D.E."/>
            <person name="Bowman S."/>
            <person name="Brown D."/>
            <person name="Churcher C.M."/>
            <person name="Connor R."/>
            <person name="Dedman K."/>
            <person name="Gentles S."/>
            <person name="Hamlin N."/>
            <person name="Hunt S."/>
            <person name="Jones L."/>
            <person name="McDonald S."/>
            <person name="Murphy L.D."/>
            <person name="Niblett D."/>
            <person name="Odell C."/>
            <person name="Oliver K."/>
            <person name="Rajandream M.A."/>
            <person name="Richards C."/>
            <person name="Shore L."/>
            <person name="Walsh S.V."/>
            <person name="Barrell B.G."/>
            <person name="Dietrich F.S."/>
            <person name="Mulligan J.T."/>
            <person name="Allen E."/>
            <person name="Araujo R."/>
            <person name="Aviles E."/>
            <person name="Berno A."/>
            <person name="Carpenter J."/>
            <person name="Chen E."/>
            <person name="Cherry J.M."/>
            <person name="Chung E."/>
            <person name="Duncan M."/>
            <person name="Hunicke-Smith S."/>
            <person name="Hyman R.W."/>
            <person name="Komp C."/>
            <person name="Lashkari D."/>
            <person name="Lew H."/>
            <person name="Lin D."/>
            <person name="Mosedale D."/>
            <person name="Nakahara K."/>
            <person name="Namath A."/>
            <person name="Oefner P."/>
            <person name="Oh C."/>
            <person name="Petel F.X."/>
            <person name="Roberts D."/>
            <person name="Schramm S."/>
            <person name="Schroeder M."/>
            <person name="Shogren T."/>
            <person name="Shroff N."/>
            <person name="Winant A."/>
            <person name="Yelton M.A."/>
            <person name="Botstein D."/>
            <person name="Davis R.W."/>
            <person name="Johnston M."/>
            <person name="Andrews S."/>
            <person name="Brinkman R."/>
            <person name="Cooper J."/>
            <person name="Ding H."/>
            <person name="Du Z."/>
            <person name="Favello A."/>
            <person name="Fulton L."/>
            <person name="Gattung S."/>
            <person name="Greco T."/>
            <person name="Hallsworth K."/>
            <person name="Hawkins J."/>
            <person name="Hillier L.W."/>
            <person name="Jier M."/>
            <person name="Johnson D."/>
            <person name="Johnston L."/>
            <person name="Kirsten J."/>
            <person name="Kucaba T."/>
            <person name="Langston Y."/>
            <person name="Latreille P."/>
            <person name="Le T."/>
            <person name="Mardis E."/>
            <person name="Menezes S."/>
            <person name="Miller N."/>
            <person name="Nhan M."/>
            <person name="Pauley A."/>
            <person name="Peluso D."/>
            <person name="Rifkin L."/>
            <person name="Riles L."/>
            <person name="Taich A."/>
            <person name="Trevaskis E."/>
            <person name="Vignati D."/>
            <person name="Wilcox L."/>
            <person name="Wohldman P."/>
            <person name="Vaudin M."/>
            <person name="Wilson R."/>
            <person name="Waterston R."/>
            <person name="Albermann K."/>
            <person name="Hani J."/>
            <person name="Heumann K."/>
            <person name="Kleine K."/>
            <person name="Mewes H.-W."/>
            <person name="Zollner A."/>
            <person name="Zaccaria P."/>
        </authorList>
    </citation>
    <scope>NUCLEOTIDE SEQUENCE [LARGE SCALE GENOMIC DNA]</scope>
    <source>
        <strain>ATCC 204508 / S288c</strain>
    </source>
</reference>
<reference key="2">
    <citation type="journal article" date="2014" name="G3 (Bethesda)">
        <title>The reference genome sequence of Saccharomyces cerevisiae: Then and now.</title>
        <authorList>
            <person name="Engel S.R."/>
            <person name="Dietrich F.S."/>
            <person name="Fisk D.G."/>
            <person name="Binkley G."/>
            <person name="Balakrishnan R."/>
            <person name="Costanzo M.C."/>
            <person name="Dwight S.S."/>
            <person name="Hitz B.C."/>
            <person name="Karra K."/>
            <person name="Nash R.S."/>
            <person name="Weng S."/>
            <person name="Wong E.D."/>
            <person name="Lloyd P."/>
            <person name="Skrzypek M.S."/>
            <person name="Miyasato S.R."/>
            <person name="Simison M."/>
            <person name="Cherry J.M."/>
        </authorList>
    </citation>
    <scope>GENOME REANNOTATION</scope>
    <source>
        <strain>ATCC 204508 / S288c</strain>
    </source>
</reference>
<reference key="3">
    <citation type="journal article" date="2007" name="Genome Res.">
        <title>Approaching a complete repository of sequence-verified protein-encoding clones for Saccharomyces cerevisiae.</title>
        <authorList>
            <person name="Hu Y."/>
            <person name="Rolfs A."/>
            <person name="Bhullar B."/>
            <person name="Murthy T.V.S."/>
            <person name="Zhu C."/>
            <person name="Berger M.F."/>
            <person name="Camargo A.A."/>
            <person name="Kelley F."/>
            <person name="McCarron S."/>
            <person name="Jepson D."/>
            <person name="Richardson A."/>
            <person name="Raphael J."/>
            <person name="Moreira D."/>
            <person name="Taycher E."/>
            <person name="Zuo D."/>
            <person name="Mohr S."/>
            <person name="Kane M.F."/>
            <person name="Williamson J."/>
            <person name="Simpson A.J.G."/>
            <person name="Bulyk M.L."/>
            <person name="Harlow E."/>
            <person name="Marsischky G."/>
            <person name="Kolodner R.D."/>
            <person name="LaBaer J."/>
        </authorList>
    </citation>
    <scope>NUCLEOTIDE SEQUENCE [GENOMIC DNA]</scope>
    <source>
        <strain>ATCC 204508 / S288c</strain>
    </source>
</reference>
<reference key="4">
    <citation type="journal article" date="2003" name="Mol. Cell">
        <title>Assigning function to yeast proteins by integration of technologies.</title>
        <authorList>
            <person name="Hazbun T.R."/>
            <person name="Malmstroem L."/>
            <person name="Anderson S."/>
            <person name="Graczyk B.J."/>
            <person name="Fox B."/>
            <person name="Riffle M."/>
            <person name="Sundin B.A."/>
            <person name="Aranda J.D."/>
            <person name="McDonald W.H."/>
            <person name="Chiu C.-H."/>
            <person name="Snydsman B.E."/>
            <person name="Bradley P."/>
            <person name="Muller E.G.D."/>
            <person name="Fields S."/>
            <person name="Baker D."/>
            <person name="Yates J.R. III"/>
            <person name="Davis T.N."/>
        </authorList>
    </citation>
    <scope>IDENTIFICATION BY MASS SPECTROMETRY</scope>
    <scope>SUBCELLULAR LOCATION [LARGE SCALE ANALYSIS]</scope>
</reference>
<reference key="5">
    <citation type="journal article" date="2003" name="Nature">
        <title>Global analysis of protein expression in yeast.</title>
        <authorList>
            <person name="Ghaemmaghami S."/>
            <person name="Huh W.-K."/>
            <person name="Bower K."/>
            <person name="Howson R.W."/>
            <person name="Belle A."/>
            <person name="Dephoure N."/>
            <person name="O'Shea E.K."/>
            <person name="Weissman J.S."/>
        </authorList>
    </citation>
    <scope>LEVEL OF PROTEIN EXPRESSION [LARGE SCALE ANALYSIS]</scope>
</reference>
<reference key="6">
    <citation type="journal article" date="2006" name="J. Proteome Res.">
        <title>Toward the complete yeast mitochondrial proteome: multidimensional separation techniques for mitochondrial proteomics.</title>
        <authorList>
            <person name="Reinders J."/>
            <person name="Zahedi R.P."/>
            <person name="Pfanner N."/>
            <person name="Meisinger C."/>
            <person name="Sickmann A."/>
        </authorList>
    </citation>
    <scope>SUBCELLULAR LOCATION [LARGE SCALE ANALYSIS]</scope>
    <scope>IDENTIFICATION BY MASS SPECTROMETRY</scope>
</reference>
<reference key="7">
    <citation type="journal article" date="2009" name="Curr. Genet.">
        <title>Genetic analysis of coenzyme A biosynthesis in the yeast Saccharomyces cerevisiae: identification of a conditional mutation in the pantothenate kinase gene CAB1.</title>
        <authorList>
            <person name="Olzhausen J."/>
            <person name="Schuebbe S."/>
            <person name="Schueller H.-J."/>
        </authorList>
    </citation>
    <scope>GENE NAME</scope>
    <scope>FUNCTION</scope>
    <scope>DISRUPTION PHENOTYPE</scope>
</reference>
<proteinExistence type="evidence at protein level"/>
<organism>
    <name type="scientific">Saccharomyces cerevisiae (strain ATCC 204508 / S288c)</name>
    <name type="common">Baker's yeast</name>
    <dbReference type="NCBI Taxonomy" id="559292"/>
    <lineage>
        <taxon>Eukaryota</taxon>
        <taxon>Fungi</taxon>
        <taxon>Dikarya</taxon>
        <taxon>Ascomycota</taxon>
        <taxon>Saccharomycotina</taxon>
        <taxon>Saccharomycetes</taxon>
        <taxon>Saccharomycetales</taxon>
        <taxon>Saccharomycetaceae</taxon>
        <taxon>Saccharomyces</taxon>
    </lineage>
</organism>
<accession>Q03941</accession>
<accession>D6VSH9</accession>
<name>CAB5_YEAST</name>
<protein>
    <recommendedName>
        <fullName>Dephospho-CoA kinase CAB5</fullName>
        <shortName>DPCK</shortName>
        <ecNumber>2.7.1.24</ecNumber>
    </recommendedName>
    <alternativeName>
        <fullName>Dephosphocoenzyme A kinase</fullName>
    </alternativeName>
</protein>
<comment type="function">
    <text evidence="5">Catalyzes the phosphorylation of the 3'-hydroxyl group of dephosphocoenzyme A to form coenzyme A.</text>
</comment>
<comment type="catalytic activity">
    <reaction>
        <text>3'-dephospho-CoA + ATP = ADP + CoA + H(+)</text>
        <dbReference type="Rhea" id="RHEA:18245"/>
        <dbReference type="ChEBI" id="CHEBI:15378"/>
        <dbReference type="ChEBI" id="CHEBI:30616"/>
        <dbReference type="ChEBI" id="CHEBI:57287"/>
        <dbReference type="ChEBI" id="CHEBI:57328"/>
        <dbReference type="ChEBI" id="CHEBI:456216"/>
        <dbReference type="EC" id="2.7.1.24"/>
    </reaction>
</comment>
<comment type="pathway">
    <text>Cofactor biosynthesis; coenzyme A biosynthesis; CoA from (R)-pantothenate: step 5/5.</text>
</comment>
<comment type="interaction">
    <interactant intactId="EBI-22174">
        <id>Q03941</id>
    </interactant>
    <interactant intactId="EBI-26778">
        <id>P36076</id>
        <label>CAB3</label>
    </interactant>
    <organismsDiffer>false</organismsDiffer>
    <experiments>7</experiments>
</comment>
<comment type="interaction">
    <interactant intactId="EBI-22174">
        <id>Q03941</id>
    </interactant>
    <interactant intactId="EBI-23648">
        <id>P53332</id>
        <label>CAB4</label>
    </interactant>
    <organismsDiffer>false</organismsDiffer>
    <experiments>6</experiments>
</comment>
<comment type="subcellular location">
    <subcellularLocation>
        <location evidence="3">Endoplasmic reticulum</location>
    </subcellularLocation>
    <subcellularLocation>
        <location evidence="3 4">Mitochondrion</location>
    </subcellularLocation>
    <subcellularLocation>
        <location evidence="3">Nucleus</location>
    </subcellularLocation>
    <text evidence="3">Nuclear envelope.</text>
</comment>
<comment type="disruption phenotype">
    <text evidence="5">Lethal.</text>
</comment>
<comment type="miscellaneous">
    <text evidence="2">Present with 1660 molecules/cell in log phase SD medium.</text>
</comment>
<comment type="similarity">
    <text evidence="6">Belongs to the CoaE family.</text>
</comment>
<sequence>MLVVGLTGGIACGKSTVSRRLRDKYKLPIVDADKIARQVVEPGQNAYDQIVLYFKDKIPNLLLEDGHLNREALGKWVFSHKEDLQALNGITHPAIRYAMFKEIGYYYLKGYRMCVLDVPLLFEGNLDSICGVTVSVICTQELQLERLMTRNPELSEEDAKNRLNSQMSTEERMARSDYILQNNSTLVDLYEQIESVVKKIQPSKLRTVLEYFPPFGAVSASSIVMSRLLMKKLQNKKSSAV</sequence>
<evidence type="ECO:0000255" key="1"/>
<evidence type="ECO:0000269" key="2">
    <source>
    </source>
</evidence>
<evidence type="ECO:0000269" key="3">
    <source>
    </source>
</evidence>
<evidence type="ECO:0000269" key="4">
    <source>
    </source>
</evidence>
<evidence type="ECO:0000269" key="5">
    <source>
    </source>
</evidence>
<evidence type="ECO:0000305" key="6"/>
<dbReference type="EC" id="2.7.1.24"/>
<dbReference type="EMBL" id="Z48784">
    <property type="protein sequence ID" value="CAA88709.1"/>
    <property type="molecule type" value="Genomic_DNA"/>
</dbReference>
<dbReference type="EMBL" id="AY557679">
    <property type="protein sequence ID" value="AAS56005.1"/>
    <property type="molecule type" value="Genomic_DNA"/>
</dbReference>
<dbReference type="EMBL" id="BK006938">
    <property type="protein sequence ID" value="DAA12039.1"/>
    <property type="molecule type" value="Genomic_DNA"/>
</dbReference>
<dbReference type="PIR" id="S52703">
    <property type="entry name" value="S52703"/>
</dbReference>
<dbReference type="RefSeq" id="NP_010482.3">
    <property type="nucleotide sequence ID" value="NM_001180504.3"/>
</dbReference>
<dbReference type="SMR" id="Q03941"/>
<dbReference type="BioGRID" id="32248">
    <property type="interactions" value="309"/>
</dbReference>
<dbReference type="ComplexPortal" id="CPX-396">
    <property type="entry name" value="Coenzyme A-synthesizing protein complex"/>
</dbReference>
<dbReference type="DIP" id="DIP-5705N"/>
<dbReference type="FunCoup" id="Q03941">
    <property type="interactions" value="471"/>
</dbReference>
<dbReference type="IntAct" id="Q03941">
    <property type="interactions" value="19"/>
</dbReference>
<dbReference type="STRING" id="4932.YDR196C"/>
<dbReference type="iPTMnet" id="Q03941"/>
<dbReference type="PaxDb" id="4932-YDR196C"/>
<dbReference type="PeptideAtlas" id="Q03941"/>
<dbReference type="EnsemblFungi" id="YDR196C_mRNA">
    <property type="protein sequence ID" value="YDR196C"/>
    <property type="gene ID" value="YDR196C"/>
</dbReference>
<dbReference type="GeneID" id="851777"/>
<dbReference type="KEGG" id="sce:YDR196C"/>
<dbReference type="AGR" id="SGD:S000002604"/>
<dbReference type="SGD" id="S000002604">
    <property type="gene designation" value="CAB5"/>
</dbReference>
<dbReference type="VEuPathDB" id="FungiDB:YDR196C"/>
<dbReference type="eggNOG" id="KOG3220">
    <property type="taxonomic scope" value="Eukaryota"/>
</dbReference>
<dbReference type="GeneTree" id="ENSGT00550000075038"/>
<dbReference type="HOGENOM" id="CLU_057180_0_1_1"/>
<dbReference type="InParanoid" id="Q03941"/>
<dbReference type="OMA" id="CQMDIEQ"/>
<dbReference type="OrthoDB" id="247245at2759"/>
<dbReference type="BioCyc" id="MetaCyc:MONOMER3O-504"/>
<dbReference type="BioCyc" id="YEAST:MONOMER3O-504"/>
<dbReference type="Reactome" id="R-SCE-196783">
    <property type="pathway name" value="Coenzyme A biosynthesis"/>
</dbReference>
<dbReference type="UniPathway" id="UPA00241">
    <property type="reaction ID" value="UER00356"/>
</dbReference>
<dbReference type="BioGRID-ORCS" id="851777">
    <property type="hits" value="2 hits in 10 CRISPR screens"/>
</dbReference>
<dbReference type="PRO" id="PR:Q03941"/>
<dbReference type="Proteomes" id="UP000002311">
    <property type="component" value="Chromosome IV"/>
</dbReference>
<dbReference type="RNAct" id="Q03941">
    <property type="molecule type" value="protein"/>
</dbReference>
<dbReference type="GO" id="GO:1990143">
    <property type="term" value="C:CoA-synthesizing protein complex"/>
    <property type="evidence" value="ECO:0000314"/>
    <property type="project" value="SGD"/>
</dbReference>
<dbReference type="GO" id="GO:0005829">
    <property type="term" value="C:cytosol"/>
    <property type="evidence" value="ECO:0007005"/>
    <property type="project" value="SGD"/>
</dbReference>
<dbReference type="GO" id="GO:0005783">
    <property type="term" value="C:endoplasmic reticulum"/>
    <property type="evidence" value="ECO:0007005"/>
    <property type="project" value="SGD"/>
</dbReference>
<dbReference type="GO" id="GO:0031315">
    <property type="term" value="C:extrinsic component of mitochondrial outer membrane"/>
    <property type="evidence" value="ECO:0000314"/>
    <property type="project" value="SGD"/>
</dbReference>
<dbReference type="GO" id="GO:0005811">
    <property type="term" value="C:lipid droplet"/>
    <property type="evidence" value="ECO:0000314"/>
    <property type="project" value="SGD"/>
</dbReference>
<dbReference type="GO" id="GO:0005739">
    <property type="term" value="C:mitochondrion"/>
    <property type="evidence" value="ECO:0007005"/>
    <property type="project" value="SGD"/>
</dbReference>
<dbReference type="GO" id="GO:0005635">
    <property type="term" value="C:nuclear envelope"/>
    <property type="evidence" value="ECO:0007005"/>
    <property type="project" value="SGD"/>
</dbReference>
<dbReference type="GO" id="GO:0005524">
    <property type="term" value="F:ATP binding"/>
    <property type="evidence" value="ECO:0007669"/>
    <property type="project" value="UniProtKB-KW"/>
</dbReference>
<dbReference type="GO" id="GO:0004140">
    <property type="term" value="F:dephospho-CoA kinase activity"/>
    <property type="evidence" value="ECO:0000250"/>
    <property type="project" value="SGD"/>
</dbReference>
<dbReference type="GO" id="GO:0015937">
    <property type="term" value="P:coenzyme A biosynthetic process"/>
    <property type="evidence" value="ECO:0000316"/>
    <property type="project" value="SGD"/>
</dbReference>
<dbReference type="CDD" id="cd02022">
    <property type="entry name" value="DPCK"/>
    <property type="match status" value="1"/>
</dbReference>
<dbReference type="FunFam" id="3.40.50.300:FF:000485">
    <property type="entry name" value="Dephospho-CoA kinase CAB5"/>
    <property type="match status" value="1"/>
</dbReference>
<dbReference type="Gene3D" id="3.40.50.300">
    <property type="entry name" value="P-loop containing nucleotide triphosphate hydrolases"/>
    <property type="match status" value="1"/>
</dbReference>
<dbReference type="HAMAP" id="MF_00376">
    <property type="entry name" value="Dephospho_CoA_kinase"/>
    <property type="match status" value="1"/>
</dbReference>
<dbReference type="InterPro" id="IPR001977">
    <property type="entry name" value="Depp_CoAkinase"/>
</dbReference>
<dbReference type="InterPro" id="IPR027417">
    <property type="entry name" value="P-loop_NTPase"/>
</dbReference>
<dbReference type="NCBIfam" id="TIGR00152">
    <property type="entry name" value="dephospho-CoA kinase"/>
    <property type="match status" value="1"/>
</dbReference>
<dbReference type="PANTHER" id="PTHR10695:SF46">
    <property type="entry name" value="BIFUNCTIONAL COENZYME A SYNTHASE-RELATED"/>
    <property type="match status" value="1"/>
</dbReference>
<dbReference type="PANTHER" id="PTHR10695">
    <property type="entry name" value="DEPHOSPHO-COA KINASE-RELATED"/>
    <property type="match status" value="1"/>
</dbReference>
<dbReference type="Pfam" id="PF01121">
    <property type="entry name" value="CoaE"/>
    <property type="match status" value="1"/>
</dbReference>
<dbReference type="SUPFAM" id="SSF52540">
    <property type="entry name" value="P-loop containing nucleoside triphosphate hydrolases"/>
    <property type="match status" value="1"/>
</dbReference>
<dbReference type="PROSITE" id="PS51219">
    <property type="entry name" value="DPCK"/>
    <property type="match status" value="1"/>
</dbReference>
<feature type="chain" id="PRO_0000173043" description="Dephospho-CoA kinase CAB5">
    <location>
        <begin position="1"/>
        <end position="241"/>
    </location>
</feature>
<feature type="domain" description="DPCK">
    <location>
        <begin position="3"/>
        <end position="211"/>
    </location>
</feature>
<feature type="binding site" evidence="1">
    <location>
        <begin position="8"/>
        <end position="15"/>
    </location>
    <ligand>
        <name>ATP</name>
        <dbReference type="ChEBI" id="CHEBI:30616"/>
    </ligand>
</feature>
<gene>
    <name type="primary">CAB5</name>
    <name type="ordered locus">YDR196C</name>
    <name type="ORF">YD9346.07C</name>
</gene>
<keyword id="KW-0067">ATP-binding</keyword>
<keyword id="KW-0173">Coenzyme A biosynthesis</keyword>
<keyword id="KW-0256">Endoplasmic reticulum</keyword>
<keyword id="KW-0418">Kinase</keyword>
<keyword id="KW-0496">Mitochondrion</keyword>
<keyword id="KW-0547">Nucleotide-binding</keyword>
<keyword id="KW-0539">Nucleus</keyword>
<keyword id="KW-1185">Reference proteome</keyword>
<keyword id="KW-0808">Transferase</keyword>